<comment type="function">
    <text evidence="2">Transcription repression factor which plays an important role in the establishment of the regional subdivision of the developing brain and in the development of the telencephalon.</text>
</comment>
<comment type="subunit">
    <text evidence="2 3">Interacts with KDM5B (By similarity). Interacts with GRG6/TLE6 (By similarity). Interacts with TLE1; the interaction is inhibited by interaction with TLE6/GRG6 (By similarity).</text>
</comment>
<comment type="subcellular location">
    <subcellularLocation>
        <location evidence="2">Nucleus</location>
    </subcellularLocation>
</comment>
<comment type="tissue specificity">
    <text>Is expressed in the cortex, olfactory bulb, hippocampus, and caudate putamen.</text>
</comment>
<comment type="developmental stage">
    <text>More abundant in fetal brain compared with the adult brain.</text>
</comment>
<keyword id="KW-0217">Developmental protein</keyword>
<keyword id="KW-0238">DNA-binding</keyword>
<keyword id="KW-0539">Nucleus</keyword>
<keyword id="KW-1185">Reference proteome</keyword>
<keyword id="KW-0804">Transcription</keyword>
<keyword id="KW-0805">Transcription regulation</keyword>
<reference key="1">
    <citation type="journal article" date="1992" name="Neuron">
        <title>Telencephalon-restricted expression of BF-1, a new member of the HNF-3/fork head gene family, in the developing rat brain.</title>
        <authorList>
            <person name="Tao W."/>
            <person name="Lai E."/>
        </authorList>
    </citation>
    <scope>NUCLEOTIDE SEQUENCE [MRNA]</scope>
    <source>
        <tissue>Brain</tissue>
    </source>
</reference>
<evidence type="ECO:0000250" key="1"/>
<evidence type="ECO:0000250" key="2">
    <source>
        <dbReference type="UniProtKB" id="P55316"/>
    </source>
</evidence>
<evidence type="ECO:0000250" key="3">
    <source>
        <dbReference type="UniProtKB" id="Q60987"/>
    </source>
</evidence>
<evidence type="ECO:0000255" key="4">
    <source>
        <dbReference type="PROSITE-ProRule" id="PRU00089"/>
    </source>
</evidence>
<evidence type="ECO:0000256" key="5">
    <source>
        <dbReference type="SAM" id="MobiDB-lite"/>
    </source>
</evidence>
<proteinExistence type="evidence at transcript level"/>
<name>FOXG1_RAT</name>
<feature type="chain" id="PRO_0000091838" description="Forkhead box protein G1">
    <location>
        <begin position="1"/>
        <end position="480"/>
    </location>
</feature>
<feature type="DNA-binding region" description="Fork-head" evidence="4">
    <location>
        <begin position="171"/>
        <end position="262"/>
    </location>
</feature>
<feature type="region of interest" description="Disordered" evidence="5">
    <location>
        <begin position="31"/>
        <end position="172"/>
    </location>
</feature>
<feature type="region of interest" description="Required for interaction with TLE6" evidence="3">
    <location>
        <begin position="240"/>
        <end position="335"/>
    </location>
</feature>
<feature type="region of interest" description="Interaction with KDM5B" evidence="1">
    <location>
        <begin position="374"/>
        <end position="397"/>
    </location>
</feature>
<feature type="region of interest" description="Disordered" evidence="5">
    <location>
        <begin position="418"/>
        <end position="446"/>
    </location>
</feature>
<feature type="compositionally biased region" description="Basic residues" evidence="5">
    <location>
        <begin position="35"/>
        <end position="57"/>
    </location>
</feature>
<feature type="compositionally biased region" description="Pro residues" evidence="5">
    <location>
        <begin position="58"/>
        <end position="82"/>
    </location>
</feature>
<feature type="compositionally biased region" description="Low complexity" evidence="5">
    <location>
        <begin position="96"/>
        <end position="118"/>
    </location>
</feature>
<feature type="compositionally biased region" description="Basic and acidic residues" evidence="5">
    <location>
        <begin position="133"/>
        <end position="172"/>
    </location>
</feature>
<feature type="compositionally biased region" description="Low complexity" evidence="5">
    <location>
        <begin position="418"/>
        <end position="441"/>
    </location>
</feature>
<dbReference type="EMBL" id="M87634">
    <property type="protein sequence ID" value="AAA40812.1"/>
    <property type="molecule type" value="mRNA"/>
</dbReference>
<dbReference type="PIR" id="JH0672">
    <property type="entry name" value="JH0672"/>
</dbReference>
<dbReference type="RefSeq" id="NP_036692.1">
    <property type="nucleotide sequence ID" value="NM_012560.4"/>
</dbReference>
<dbReference type="BMRB" id="Q00939"/>
<dbReference type="SMR" id="Q00939"/>
<dbReference type="BioGRID" id="246542">
    <property type="interactions" value="1"/>
</dbReference>
<dbReference type="FunCoup" id="Q00939">
    <property type="interactions" value="176"/>
</dbReference>
<dbReference type="STRING" id="10116.ENSRNOP00000067118"/>
<dbReference type="iPTMnet" id="Q00939"/>
<dbReference type="PhosphoSitePlus" id="Q00939"/>
<dbReference type="PaxDb" id="10116-ENSRNOP00000067118"/>
<dbReference type="Ensembl" id="ENSRNOT00000075349.2">
    <property type="protein sequence ID" value="ENSRNOP00000067118.1"/>
    <property type="gene ID" value="ENSRNOG00000047891.2"/>
</dbReference>
<dbReference type="Ensembl" id="ENSRNOT00000107556.1">
    <property type="protein sequence ID" value="ENSRNOP00000082177.1"/>
    <property type="gene ID" value="ENSRNOG00000047891.2"/>
</dbReference>
<dbReference type="Ensembl" id="ENSRNOT00000116180.1">
    <property type="protein sequence ID" value="ENSRNOP00000077714.1"/>
    <property type="gene ID" value="ENSRNOG00000047891.2"/>
</dbReference>
<dbReference type="GeneID" id="24370"/>
<dbReference type="KEGG" id="rno:24370"/>
<dbReference type="UCSC" id="RGD:2619">
    <property type="organism name" value="rat"/>
</dbReference>
<dbReference type="AGR" id="RGD:2619"/>
<dbReference type="CTD" id="2290"/>
<dbReference type="RGD" id="2619">
    <property type="gene designation" value="Foxg1"/>
</dbReference>
<dbReference type="eggNOG" id="KOG2294">
    <property type="taxonomic scope" value="Eukaryota"/>
</dbReference>
<dbReference type="GeneTree" id="ENSGT00940000160678"/>
<dbReference type="HOGENOM" id="CLU_040357_1_0_1"/>
<dbReference type="InParanoid" id="Q00939"/>
<dbReference type="OMA" id="AHPMSYS"/>
<dbReference type="OrthoDB" id="5954824at2759"/>
<dbReference type="PhylomeDB" id="Q00939"/>
<dbReference type="Reactome" id="R-RNO-9617828">
    <property type="pathway name" value="FOXO-mediated transcription of cell cycle genes"/>
</dbReference>
<dbReference type="PRO" id="PR:Q00939"/>
<dbReference type="Proteomes" id="UP000002494">
    <property type="component" value="Chromosome 6"/>
</dbReference>
<dbReference type="Bgee" id="ENSRNOG00000047891">
    <property type="expression patterns" value="Expressed in Ammon's horn and 3 other cell types or tissues"/>
</dbReference>
<dbReference type="GO" id="GO:0005634">
    <property type="term" value="C:nucleus"/>
    <property type="evidence" value="ECO:0000266"/>
    <property type="project" value="RGD"/>
</dbReference>
<dbReference type="GO" id="GO:0003700">
    <property type="term" value="F:DNA-binding transcription factor activity"/>
    <property type="evidence" value="ECO:0007669"/>
    <property type="project" value="InterPro"/>
</dbReference>
<dbReference type="GO" id="GO:0043565">
    <property type="term" value="F:sequence-specific DNA binding"/>
    <property type="evidence" value="ECO:0000266"/>
    <property type="project" value="RGD"/>
</dbReference>
<dbReference type="GO" id="GO:1990837">
    <property type="term" value="F:sequence-specific double-stranded DNA binding"/>
    <property type="evidence" value="ECO:0000266"/>
    <property type="project" value="RGD"/>
</dbReference>
<dbReference type="GO" id="GO:0016199">
    <property type="term" value="P:axon midline choice point recognition"/>
    <property type="evidence" value="ECO:0000266"/>
    <property type="project" value="RGD"/>
</dbReference>
<dbReference type="GO" id="GO:0048667">
    <property type="term" value="P:cell morphogenesis involved in neuron differentiation"/>
    <property type="evidence" value="ECO:0000266"/>
    <property type="project" value="RGD"/>
</dbReference>
<dbReference type="GO" id="GO:0021954">
    <property type="term" value="P:central nervous system neuron development"/>
    <property type="evidence" value="ECO:0000266"/>
    <property type="project" value="RGD"/>
</dbReference>
<dbReference type="GO" id="GO:0021987">
    <property type="term" value="P:cerebral cortex development"/>
    <property type="evidence" value="ECO:0000266"/>
    <property type="project" value="RGD"/>
</dbReference>
<dbReference type="GO" id="GO:0009953">
    <property type="term" value="P:dorsal/ventral pattern formation"/>
    <property type="evidence" value="ECO:0000266"/>
    <property type="project" value="RGD"/>
</dbReference>
<dbReference type="GO" id="GO:0030900">
    <property type="term" value="P:forebrain development"/>
    <property type="evidence" value="ECO:0000266"/>
    <property type="project" value="RGD"/>
</dbReference>
<dbReference type="GO" id="GO:0042472">
    <property type="term" value="P:inner ear morphogenesis"/>
    <property type="evidence" value="ECO:0000266"/>
    <property type="project" value="RGD"/>
</dbReference>
<dbReference type="GO" id="GO:0045892">
    <property type="term" value="P:negative regulation of DNA-templated transcription"/>
    <property type="evidence" value="ECO:0000266"/>
    <property type="project" value="RGD"/>
</dbReference>
<dbReference type="GO" id="GO:0045665">
    <property type="term" value="P:negative regulation of neuron differentiation"/>
    <property type="evidence" value="ECO:0000266"/>
    <property type="project" value="RGD"/>
</dbReference>
<dbReference type="GO" id="GO:0000122">
    <property type="term" value="P:negative regulation of transcription by RNA polymerase II"/>
    <property type="evidence" value="ECO:0000266"/>
    <property type="project" value="RGD"/>
</dbReference>
<dbReference type="GO" id="GO:0007405">
    <property type="term" value="P:neuroblast proliferation"/>
    <property type="evidence" value="ECO:0000266"/>
    <property type="project" value="RGD"/>
</dbReference>
<dbReference type="GO" id="GO:0022008">
    <property type="term" value="P:neurogenesis"/>
    <property type="evidence" value="ECO:0000266"/>
    <property type="project" value="RGD"/>
</dbReference>
<dbReference type="GO" id="GO:0030182">
    <property type="term" value="P:neuron differentiation"/>
    <property type="evidence" value="ECO:0000266"/>
    <property type="project" value="RGD"/>
</dbReference>
<dbReference type="GO" id="GO:0048664">
    <property type="term" value="P:neuron fate determination"/>
    <property type="evidence" value="ECO:0000266"/>
    <property type="project" value="RGD"/>
</dbReference>
<dbReference type="GO" id="GO:0045787">
    <property type="term" value="P:positive regulation of cell cycle"/>
    <property type="evidence" value="ECO:0000266"/>
    <property type="project" value="RGD"/>
</dbReference>
<dbReference type="GO" id="GO:0002052">
    <property type="term" value="P:positive regulation of neuroblast proliferation"/>
    <property type="evidence" value="ECO:0000266"/>
    <property type="project" value="RGD"/>
</dbReference>
<dbReference type="GO" id="GO:0045666">
    <property type="term" value="P:positive regulation of neuron differentiation"/>
    <property type="evidence" value="ECO:0000266"/>
    <property type="project" value="RGD"/>
</dbReference>
<dbReference type="GO" id="GO:0021852">
    <property type="term" value="P:pyramidal neuron migration to cerebral cortex"/>
    <property type="evidence" value="ECO:0000266"/>
    <property type="project" value="RGD"/>
</dbReference>
<dbReference type="GO" id="GO:0051726">
    <property type="term" value="P:regulation of cell cycle"/>
    <property type="evidence" value="ECO:0000266"/>
    <property type="project" value="RGD"/>
</dbReference>
<dbReference type="GO" id="GO:0010468">
    <property type="term" value="P:regulation of gene expression"/>
    <property type="evidence" value="ECO:0000266"/>
    <property type="project" value="RGD"/>
</dbReference>
<dbReference type="GO" id="GO:0007346">
    <property type="term" value="P:regulation of mitotic cell cycle"/>
    <property type="evidence" value="ECO:0000266"/>
    <property type="project" value="RGD"/>
</dbReference>
<dbReference type="GO" id="GO:2000177">
    <property type="term" value="P:regulation of neural precursor cell proliferation"/>
    <property type="evidence" value="ECO:0000266"/>
    <property type="project" value="RGD"/>
</dbReference>
<dbReference type="GO" id="GO:0006357">
    <property type="term" value="P:regulation of transcription by RNA polymerase II"/>
    <property type="evidence" value="ECO:0000318"/>
    <property type="project" value="GO_Central"/>
</dbReference>
<dbReference type="CDD" id="cd20021">
    <property type="entry name" value="FH_FOXG"/>
    <property type="match status" value="1"/>
</dbReference>
<dbReference type="FunFam" id="1.10.10.10:FF:000135">
    <property type="entry name" value="forkhead box protein G1"/>
    <property type="match status" value="1"/>
</dbReference>
<dbReference type="Gene3D" id="1.10.10.10">
    <property type="entry name" value="Winged helix-like DNA-binding domain superfamily/Winged helix DNA-binding domain"/>
    <property type="match status" value="1"/>
</dbReference>
<dbReference type="InterPro" id="IPR001766">
    <property type="entry name" value="Fork_head_dom"/>
</dbReference>
<dbReference type="InterPro" id="IPR047208">
    <property type="entry name" value="FOXG1"/>
</dbReference>
<dbReference type="InterPro" id="IPR018122">
    <property type="entry name" value="TF_fork_head_CS_1"/>
</dbReference>
<dbReference type="InterPro" id="IPR030456">
    <property type="entry name" value="TF_fork_head_CS_2"/>
</dbReference>
<dbReference type="InterPro" id="IPR036388">
    <property type="entry name" value="WH-like_DNA-bd_sf"/>
</dbReference>
<dbReference type="InterPro" id="IPR036390">
    <property type="entry name" value="WH_DNA-bd_sf"/>
</dbReference>
<dbReference type="PANTHER" id="PTHR46617">
    <property type="entry name" value="FORKHEAD BOX PROTEIN G1"/>
    <property type="match status" value="1"/>
</dbReference>
<dbReference type="PANTHER" id="PTHR46617:SF3">
    <property type="entry name" value="FORKHEAD BOX PROTEIN G1"/>
    <property type="match status" value="1"/>
</dbReference>
<dbReference type="Pfam" id="PF00250">
    <property type="entry name" value="Forkhead"/>
    <property type="match status" value="1"/>
</dbReference>
<dbReference type="PRINTS" id="PR00053">
    <property type="entry name" value="FORKHEAD"/>
</dbReference>
<dbReference type="SMART" id="SM00339">
    <property type="entry name" value="FH"/>
    <property type="match status" value="1"/>
</dbReference>
<dbReference type="SUPFAM" id="SSF81995">
    <property type="entry name" value="beta-sandwich domain of Sec23/24"/>
    <property type="match status" value="1"/>
</dbReference>
<dbReference type="SUPFAM" id="SSF46785">
    <property type="entry name" value="Winged helix' DNA-binding domain"/>
    <property type="match status" value="1"/>
</dbReference>
<dbReference type="PROSITE" id="PS00657">
    <property type="entry name" value="FORK_HEAD_1"/>
    <property type="match status" value="1"/>
</dbReference>
<dbReference type="PROSITE" id="PS00658">
    <property type="entry name" value="FORK_HEAD_2"/>
    <property type="match status" value="1"/>
</dbReference>
<dbReference type="PROSITE" id="PS50039">
    <property type="entry name" value="FORK_HEAD_3"/>
    <property type="match status" value="1"/>
</dbReference>
<accession>Q00939</accession>
<gene>
    <name type="primary">Foxg1</name>
    <name type="synonym">Fkhl1</name>
    <name type="synonym">Foxg1b</name>
</gene>
<sequence>MLDMGDRKEVKMIPKSSFSINSLVPEAVQNDNHHASHGHHNSHHPQHHHHHHHHHHPPPPAPQPPPPPPQQQQQPPPAPQPPQARGAPAADDDKGPQPLLLPPSAALDGAKADALGAKGEPGGGPAELAPVGPDEKEKGAGAGGEEKKGAGEGGKDGEGGKEGDKKNGKYEKPPFSYNALIMMAIRQSPEKRLTLNGIYEFIMKNFPYYRENKQGWQNSIRHNLSLNKCFVKVPRHYDDPGKGNYWMLDPSSDDVFIGGTTGKLRRRSTTSRAKLAFKRGARLTSTGLTFMDRAGSLYWPMSPFLSLHHPRASSTLSYNGTTSAYPSHPMPYSSVLTQNSLGNNHSFSTANGLSVDRLVNGEIPYATHHLTAAALAASVPCGLSVPCSGTYSLNPCSVNLLAGQTSYFFPHVPHPSMTSQTSTSMSARAASSSTSPQAPSTLPCESLRPSLPSFTTGLSGGLSDYFTHQNQGSSSNPLIH</sequence>
<protein>
    <recommendedName>
        <fullName>Forkhead box protein G1</fullName>
        <shortName>FoxG1</shortName>
    </recommendedName>
    <alternativeName>
        <fullName>Brain factor 1</fullName>
        <shortName>BF-1</shortName>
        <shortName>BF1</shortName>
    </alternativeName>
    <alternativeName>
        <fullName>Forkhead-related protein FKHL1</fullName>
    </alternativeName>
</protein>
<organism>
    <name type="scientific">Rattus norvegicus</name>
    <name type="common">Rat</name>
    <dbReference type="NCBI Taxonomy" id="10116"/>
    <lineage>
        <taxon>Eukaryota</taxon>
        <taxon>Metazoa</taxon>
        <taxon>Chordata</taxon>
        <taxon>Craniata</taxon>
        <taxon>Vertebrata</taxon>
        <taxon>Euteleostomi</taxon>
        <taxon>Mammalia</taxon>
        <taxon>Eutheria</taxon>
        <taxon>Euarchontoglires</taxon>
        <taxon>Glires</taxon>
        <taxon>Rodentia</taxon>
        <taxon>Myomorpha</taxon>
        <taxon>Muroidea</taxon>
        <taxon>Muridae</taxon>
        <taxon>Murinae</taxon>
        <taxon>Rattus</taxon>
    </lineage>
</organism>